<name>ATPN_SCHPO</name>
<organism>
    <name type="scientific">Schizosaccharomyces pombe (strain 972 / ATCC 24843)</name>
    <name type="common">Fission yeast</name>
    <dbReference type="NCBI Taxonomy" id="284812"/>
    <lineage>
        <taxon>Eukaryota</taxon>
        <taxon>Fungi</taxon>
        <taxon>Dikarya</taxon>
        <taxon>Ascomycota</taxon>
        <taxon>Taphrinomycotina</taxon>
        <taxon>Schizosaccharomycetes</taxon>
        <taxon>Schizosaccharomycetales</taxon>
        <taxon>Schizosaccharomycetaceae</taxon>
        <taxon>Schizosaccharomyces</taxon>
    </lineage>
</organism>
<reference key="1">
    <citation type="journal article" date="2002" name="Nature">
        <title>The genome sequence of Schizosaccharomyces pombe.</title>
        <authorList>
            <person name="Wood V."/>
            <person name="Gwilliam R."/>
            <person name="Rajandream M.A."/>
            <person name="Lyne M.H."/>
            <person name="Lyne R."/>
            <person name="Stewart A."/>
            <person name="Sgouros J.G."/>
            <person name="Peat N."/>
            <person name="Hayles J."/>
            <person name="Baker S.G."/>
            <person name="Basham D."/>
            <person name="Bowman S."/>
            <person name="Brooks K."/>
            <person name="Brown D."/>
            <person name="Brown S."/>
            <person name="Chillingworth T."/>
            <person name="Churcher C.M."/>
            <person name="Collins M."/>
            <person name="Connor R."/>
            <person name="Cronin A."/>
            <person name="Davis P."/>
            <person name="Feltwell T."/>
            <person name="Fraser A."/>
            <person name="Gentles S."/>
            <person name="Goble A."/>
            <person name="Hamlin N."/>
            <person name="Harris D.E."/>
            <person name="Hidalgo J."/>
            <person name="Hodgson G."/>
            <person name="Holroyd S."/>
            <person name="Hornsby T."/>
            <person name="Howarth S."/>
            <person name="Huckle E.J."/>
            <person name="Hunt S."/>
            <person name="Jagels K."/>
            <person name="James K.D."/>
            <person name="Jones L."/>
            <person name="Jones M."/>
            <person name="Leather S."/>
            <person name="McDonald S."/>
            <person name="McLean J."/>
            <person name="Mooney P."/>
            <person name="Moule S."/>
            <person name="Mungall K.L."/>
            <person name="Murphy L.D."/>
            <person name="Niblett D."/>
            <person name="Odell C."/>
            <person name="Oliver K."/>
            <person name="O'Neil S."/>
            <person name="Pearson D."/>
            <person name="Quail M.A."/>
            <person name="Rabbinowitsch E."/>
            <person name="Rutherford K.M."/>
            <person name="Rutter S."/>
            <person name="Saunders D."/>
            <person name="Seeger K."/>
            <person name="Sharp S."/>
            <person name="Skelton J."/>
            <person name="Simmonds M.N."/>
            <person name="Squares R."/>
            <person name="Squares S."/>
            <person name="Stevens K."/>
            <person name="Taylor K."/>
            <person name="Taylor R.G."/>
            <person name="Tivey A."/>
            <person name="Walsh S.V."/>
            <person name="Warren T."/>
            <person name="Whitehead S."/>
            <person name="Woodward J.R."/>
            <person name="Volckaert G."/>
            <person name="Aert R."/>
            <person name="Robben J."/>
            <person name="Grymonprez B."/>
            <person name="Weltjens I."/>
            <person name="Vanstreels E."/>
            <person name="Rieger M."/>
            <person name="Schaefer M."/>
            <person name="Mueller-Auer S."/>
            <person name="Gabel C."/>
            <person name="Fuchs M."/>
            <person name="Duesterhoeft A."/>
            <person name="Fritzc C."/>
            <person name="Holzer E."/>
            <person name="Moestl D."/>
            <person name="Hilbert H."/>
            <person name="Borzym K."/>
            <person name="Langer I."/>
            <person name="Beck A."/>
            <person name="Lehrach H."/>
            <person name="Reinhardt R."/>
            <person name="Pohl T.M."/>
            <person name="Eger P."/>
            <person name="Zimmermann W."/>
            <person name="Wedler H."/>
            <person name="Wambutt R."/>
            <person name="Purnelle B."/>
            <person name="Goffeau A."/>
            <person name="Cadieu E."/>
            <person name="Dreano S."/>
            <person name="Gloux S."/>
            <person name="Lelaure V."/>
            <person name="Mottier S."/>
            <person name="Galibert F."/>
            <person name="Aves S.J."/>
            <person name="Xiang Z."/>
            <person name="Hunt C."/>
            <person name="Moore K."/>
            <person name="Hurst S.M."/>
            <person name="Lucas M."/>
            <person name="Rochet M."/>
            <person name="Gaillardin C."/>
            <person name="Tallada V.A."/>
            <person name="Garzon A."/>
            <person name="Thode G."/>
            <person name="Daga R.R."/>
            <person name="Cruzado L."/>
            <person name="Jimenez J."/>
            <person name="Sanchez M."/>
            <person name="del Rey F."/>
            <person name="Benito J."/>
            <person name="Dominguez A."/>
            <person name="Revuelta J.L."/>
            <person name="Moreno S."/>
            <person name="Armstrong J."/>
            <person name="Forsburg S.L."/>
            <person name="Cerutti L."/>
            <person name="Lowe T."/>
            <person name="McCombie W.R."/>
            <person name="Paulsen I."/>
            <person name="Potashkin J."/>
            <person name="Shpakovski G.V."/>
            <person name="Ussery D."/>
            <person name="Barrell B.G."/>
            <person name="Nurse P."/>
        </authorList>
    </citation>
    <scope>NUCLEOTIDE SEQUENCE [LARGE SCALE GENOMIC DNA]</scope>
    <source>
        <strain>972 / ATCC 24843</strain>
    </source>
</reference>
<reference key="2">
    <citation type="journal article" date="2006" name="Nat. Biotechnol.">
        <title>ORFeome cloning and global analysis of protein localization in the fission yeast Schizosaccharomyces pombe.</title>
        <authorList>
            <person name="Matsuyama A."/>
            <person name="Arai R."/>
            <person name="Yashiroda Y."/>
            <person name="Shirai A."/>
            <person name="Kamata A."/>
            <person name="Sekido S."/>
            <person name="Kobayashi Y."/>
            <person name="Hashimoto A."/>
            <person name="Hamamoto M."/>
            <person name="Hiraoka Y."/>
            <person name="Horinouchi S."/>
            <person name="Yoshida M."/>
        </authorList>
    </citation>
    <scope>SUBCELLULAR LOCATION [LARGE SCALE ANALYSIS]</scope>
</reference>
<feature type="chain" id="PRO_0000116400" description="ATP synthase subunit g, mitochondrial">
    <location>
        <begin position="1"/>
        <end position="118"/>
    </location>
</feature>
<accession>Q09774</accession>
<sequence length="118" mass="13640">MFSTSRIISRINYNFLRKSHYSTKTVAEQAKGRFTPLIQKLSAVQQPIMYWANVSKELVQQVYHSQKIAPPSNTHSPFLFWKSQSSEAWGRNFFIAVEIVGIFCAGQMVGRRKITPYH</sequence>
<evidence type="ECO:0000250" key="1"/>
<evidence type="ECO:0000269" key="2">
    <source>
    </source>
</evidence>
<evidence type="ECO:0000305" key="3"/>
<dbReference type="EMBL" id="CU329670">
    <property type="protein sequence ID" value="CAA91072.1"/>
    <property type="molecule type" value="Genomic_DNA"/>
</dbReference>
<dbReference type="PIR" id="T38184">
    <property type="entry name" value="S62422"/>
</dbReference>
<dbReference type="RefSeq" id="NP_593034.1">
    <property type="nucleotide sequence ID" value="NM_001018433.2"/>
</dbReference>
<dbReference type="BioGRID" id="278368">
    <property type="interactions" value="2"/>
</dbReference>
<dbReference type="ComplexPortal" id="CPX-25764">
    <property type="entry name" value="Mitochondrial proton translocating ATP synthase complex"/>
</dbReference>
<dbReference type="FunCoup" id="Q09774">
    <property type="interactions" value="1"/>
</dbReference>
<dbReference type="STRING" id="284812.Q09774"/>
<dbReference type="iPTMnet" id="Q09774"/>
<dbReference type="PaxDb" id="4896-SPAC22F3.07c.1"/>
<dbReference type="EnsemblFungi" id="SPAC22F3.07c.1">
    <property type="protein sequence ID" value="SPAC22F3.07c.1:pep"/>
    <property type="gene ID" value="SPAC22F3.07c"/>
</dbReference>
<dbReference type="GeneID" id="2541878"/>
<dbReference type="KEGG" id="spo:2541878"/>
<dbReference type="PomBase" id="SPAC22F3.07c">
    <property type="gene designation" value="atp20"/>
</dbReference>
<dbReference type="VEuPathDB" id="FungiDB:SPAC22F3.07c"/>
<dbReference type="HOGENOM" id="CLU_2074500_0_0_1"/>
<dbReference type="InParanoid" id="Q09774"/>
<dbReference type="OMA" id="PFLFWKS"/>
<dbReference type="PhylomeDB" id="Q09774"/>
<dbReference type="PRO" id="PR:Q09774"/>
<dbReference type="Proteomes" id="UP000002485">
    <property type="component" value="Chromosome I"/>
</dbReference>
<dbReference type="GO" id="GO:0099617">
    <property type="term" value="C:matrix side of mitochondrial inner membrane"/>
    <property type="evidence" value="ECO:0000305"/>
    <property type="project" value="PomBase"/>
</dbReference>
<dbReference type="GO" id="GO:0005739">
    <property type="term" value="C:mitochondrion"/>
    <property type="evidence" value="ECO:0007005"/>
    <property type="project" value="PomBase"/>
</dbReference>
<dbReference type="GO" id="GO:0045259">
    <property type="term" value="C:proton-transporting ATP synthase complex"/>
    <property type="evidence" value="ECO:0000250"/>
    <property type="project" value="PomBase"/>
</dbReference>
<dbReference type="GO" id="GO:0015078">
    <property type="term" value="F:proton transmembrane transporter activity"/>
    <property type="evidence" value="ECO:0007669"/>
    <property type="project" value="InterPro"/>
</dbReference>
<dbReference type="GO" id="GO:0005198">
    <property type="term" value="F:structural molecule activity"/>
    <property type="evidence" value="ECO:0000250"/>
    <property type="project" value="PomBase"/>
</dbReference>
<dbReference type="GO" id="GO:0042776">
    <property type="term" value="P:proton motive force-driven mitochondrial ATP synthesis"/>
    <property type="evidence" value="ECO:0000250"/>
    <property type="project" value="PomBase"/>
</dbReference>
<dbReference type="InterPro" id="IPR006808">
    <property type="entry name" value="ATP_synth_F0_gsu_mt"/>
</dbReference>
<dbReference type="Pfam" id="PF04718">
    <property type="entry name" value="ATP-synt_G"/>
    <property type="match status" value="1"/>
</dbReference>
<keyword id="KW-0066">ATP synthesis</keyword>
<keyword id="KW-0138">CF(0)</keyword>
<keyword id="KW-0375">Hydrogen ion transport</keyword>
<keyword id="KW-0406">Ion transport</keyword>
<keyword id="KW-0472">Membrane</keyword>
<keyword id="KW-0496">Mitochondrion</keyword>
<keyword id="KW-0597">Phosphoprotein</keyword>
<keyword id="KW-1185">Reference proteome</keyword>
<keyword id="KW-0813">Transport</keyword>
<comment type="function">
    <text evidence="1">Mitochondrial membrane ATP synthase (F(1)F(0) ATP synthase or Complex V) produces ATP from ADP in the presence of a proton gradient across the membrane which is generated by electron transport complexes of the respiratory chain. F-type ATPases consist of two structural domains, F(1) - containing the extramembraneous catalytic core, and F(0) - containing the membrane proton channel, linked together by a central stalk and a peripheral stalk. During catalysis, ATP synthesis in the catalytic domain of F(1) is coupled via a rotary mechanism of the central stalk subunits to proton translocation. Part of the complex F(0) domain. Minor subunit located with subunit a in the membrane (By similarity).</text>
</comment>
<comment type="subunit">
    <text evidence="1">F-type ATPases have 2 components, CF(1) - the catalytic core - and CF(0) - the membrane proton channel.</text>
</comment>
<comment type="subcellular location">
    <subcellularLocation>
        <location evidence="2">Mitochondrion membrane</location>
    </subcellularLocation>
</comment>
<comment type="similarity">
    <text evidence="3">Belongs to the ATPase g subunit family.</text>
</comment>
<proteinExistence type="inferred from homology"/>
<protein>
    <recommendedName>
        <fullName>ATP synthase subunit g, mitochondrial</fullName>
        <shortName>ATPase subunit g</shortName>
    </recommendedName>
</protein>
<gene>
    <name type="primary">atp20</name>
    <name type="ORF">SPAC22F3.07c</name>
</gene>